<dbReference type="EC" id="2.4.2.6"/>
<dbReference type="EMBL" id="AE017198">
    <property type="protein sequence ID" value="AAS08106.1"/>
    <property type="molecule type" value="Genomic_DNA"/>
</dbReference>
<dbReference type="SMR" id="Q74LQ9"/>
<dbReference type="KEGG" id="ljo:LJ_0124"/>
<dbReference type="PATRIC" id="fig|257314.6.peg.133"/>
<dbReference type="eggNOG" id="COG3613">
    <property type="taxonomic scope" value="Bacteria"/>
</dbReference>
<dbReference type="HOGENOM" id="CLU_117644_1_0_9"/>
<dbReference type="UniPathway" id="UPA00312"/>
<dbReference type="Proteomes" id="UP000000581">
    <property type="component" value="Chromosome"/>
</dbReference>
<dbReference type="GO" id="GO:0050144">
    <property type="term" value="F:nucleoside deoxyribosyltransferase activity"/>
    <property type="evidence" value="ECO:0007669"/>
    <property type="project" value="UniProtKB-EC"/>
</dbReference>
<dbReference type="GO" id="GO:0043173">
    <property type="term" value="P:nucleotide salvage"/>
    <property type="evidence" value="ECO:0007669"/>
    <property type="project" value="UniProtKB-UniPathway"/>
</dbReference>
<dbReference type="Gene3D" id="3.40.50.450">
    <property type="match status" value="1"/>
</dbReference>
<dbReference type="InterPro" id="IPR007710">
    <property type="entry name" value="Nucleoside_deoxyribTrfase"/>
</dbReference>
<dbReference type="Pfam" id="PF05014">
    <property type="entry name" value="Nuc_deoxyrib_tr"/>
    <property type="match status" value="1"/>
</dbReference>
<dbReference type="SUPFAM" id="SSF52309">
    <property type="entry name" value="N-(deoxy)ribosyltransferase-like"/>
    <property type="match status" value="1"/>
</dbReference>
<comment type="function">
    <text evidence="1">Catalyzes the cleavage of the glycosidic bond of 2'-deoxyribonucleosides and the transfer of the deoxyribosyl moiety to an acceptor purine or pyrimidine base.</text>
</comment>
<comment type="catalytic activity">
    <reaction>
        <text>2-deoxy-D-ribosyl-base(1) + base(2) = 2-deoxy-D-ribosyl-base(2) + base(1).</text>
        <dbReference type="EC" id="2.4.2.6"/>
    </reaction>
</comment>
<comment type="pathway">
    <text>Nucleotide metabolism; nucleotide salvage pathway.</text>
</comment>
<comment type="similarity">
    <text evidence="2">Belongs to the nucleoside deoxyribosyltransferase family.</text>
</comment>
<reference key="1">
    <citation type="journal article" date="2004" name="Proc. Natl. Acad. Sci. U.S.A.">
        <title>The genome sequence of the probiotic intestinal bacterium Lactobacillus johnsonii NCC 533.</title>
        <authorList>
            <person name="Pridmore R.D."/>
            <person name="Berger B."/>
            <person name="Desiere F."/>
            <person name="Vilanova D."/>
            <person name="Barretto C."/>
            <person name="Pittet A.-C."/>
            <person name="Zwahlen M.-C."/>
            <person name="Rouvet M."/>
            <person name="Altermann E."/>
            <person name="Barrangou R."/>
            <person name="Mollet B."/>
            <person name="Mercenier A."/>
            <person name="Klaenhammer T."/>
            <person name="Arigoni F."/>
            <person name="Schell M.A."/>
        </authorList>
    </citation>
    <scope>NUCLEOTIDE SEQUENCE [LARGE SCALE GENOMIC DNA]</scope>
    <source>
        <strain>CNCM I-1225 / La1 / NCC 533</strain>
    </source>
</reference>
<keyword id="KW-0546">Nucleotide metabolism</keyword>
<keyword id="KW-0808">Transferase</keyword>
<accession>Q74LQ9</accession>
<organism>
    <name type="scientific">Lactobacillus johnsonii (strain CNCM I-12250 / La1 / NCC 533)</name>
    <dbReference type="NCBI Taxonomy" id="257314"/>
    <lineage>
        <taxon>Bacteria</taxon>
        <taxon>Bacillati</taxon>
        <taxon>Bacillota</taxon>
        <taxon>Bacilli</taxon>
        <taxon>Lactobacillales</taxon>
        <taxon>Lactobacillaceae</taxon>
        <taxon>Lactobacillus</taxon>
    </lineage>
</organism>
<proteinExistence type="inferred from homology"/>
<protein>
    <recommendedName>
        <fullName>Nucleoside deoxyribosyltransferase</fullName>
        <shortName>N-deoxyribosyltransferase</shortName>
        <ecNumber>2.4.2.6</ecNumber>
    </recommendedName>
</protein>
<evidence type="ECO:0000250" key="1"/>
<evidence type="ECO:0000305" key="2"/>
<feature type="chain" id="PRO_0000220066" description="Nucleoside deoxyribosyltransferase">
    <location>
        <begin position="1"/>
        <end position="149"/>
    </location>
</feature>
<feature type="active site" description="Nucleophile" evidence="1">
    <location>
        <position position="90"/>
    </location>
</feature>
<gene>
    <name type="primary">ntd</name>
    <name type="ordered locus">LJ_0124</name>
</gene>
<name>NTD_LACJO</name>
<sequence>MAGWFTETQNKAYKDAMSALNANPTIDLENSYVPLQNQYKDIRVDEHPEYLHDKEWAQATYNGDLVGIKTSDVMLGVYVPKEEDVGLGMELGYAMSQGKYVLLVIPDELYGESINLMSWGVADNVIKMSELATFDFNRPRYNFYDGAVY</sequence>